<reference key="1">
    <citation type="journal article" date="2008" name="Genome Res.">
        <title>Genome sequence of the beta-rhizobium Cupriavidus taiwanensis and comparative genomics of rhizobia.</title>
        <authorList>
            <person name="Amadou C."/>
            <person name="Pascal G."/>
            <person name="Mangenot S."/>
            <person name="Glew M."/>
            <person name="Bontemps C."/>
            <person name="Capela D."/>
            <person name="Carrere S."/>
            <person name="Cruveiller S."/>
            <person name="Dossat C."/>
            <person name="Lajus A."/>
            <person name="Marchetti M."/>
            <person name="Poinsot V."/>
            <person name="Rouy Z."/>
            <person name="Servin B."/>
            <person name="Saad M."/>
            <person name="Schenowitz C."/>
            <person name="Barbe V."/>
            <person name="Batut J."/>
            <person name="Medigue C."/>
            <person name="Masson-Boivin C."/>
        </authorList>
    </citation>
    <scope>NUCLEOTIDE SEQUENCE [LARGE SCALE GENOMIC DNA]</scope>
    <source>
        <strain>DSM 17343 / BCRC 17206 / CCUG 44338 / CIP 107171 / LMG 19424 / R1</strain>
    </source>
</reference>
<name>F16A1_CUPTR</name>
<organism>
    <name type="scientific">Cupriavidus taiwanensis (strain DSM 17343 / BCRC 17206 / CCUG 44338 / CIP 107171 / LMG 19424 / R1)</name>
    <name type="common">Ralstonia taiwanensis (strain LMG 19424)</name>
    <dbReference type="NCBI Taxonomy" id="977880"/>
    <lineage>
        <taxon>Bacteria</taxon>
        <taxon>Pseudomonadati</taxon>
        <taxon>Pseudomonadota</taxon>
        <taxon>Betaproteobacteria</taxon>
        <taxon>Burkholderiales</taxon>
        <taxon>Burkholderiaceae</taxon>
        <taxon>Cupriavidus</taxon>
    </lineage>
</organism>
<evidence type="ECO:0000255" key="1">
    <source>
        <dbReference type="HAMAP-Rule" id="MF_01855"/>
    </source>
</evidence>
<accession>B3R3R6</accession>
<proteinExistence type="inferred from homology"/>
<protein>
    <recommendedName>
        <fullName evidence="1">Fructose-1,6-bisphosphatase class 1 1</fullName>
        <shortName evidence="1">FBPase class 1 1</shortName>
        <ecNumber evidence="1">3.1.3.11</ecNumber>
    </recommendedName>
    <alternativeName>
        <fullName evidence="1">D-fructose-1,6-bisphosphate 1-phosphohydrolase class 1 1</fullName>
    </alternativeName>
</protein>
<gene>
    <name evidence="1" type="primary">fbp1</name>
    <name type="ordered locus">RALTA_A0983</name>
</gene>
<keyword id="KW-0119">Carbohydrate metabolism</keyword>
<keyword id="KW-0963">Cytoplasm</keyword>
<keyword id="KW-0378">Hydrolase</keyword>
<keyword id="KW-0460">Magnesium</keyword>
<keyword id="KW-0479">Metal-binding</keyword>
<sequence length="338" mass="37408">MTRISLTRYLVEEQRKHNTIQPELRLLIEVVARACKAISNAVSKGALAGVLGSAGTGNVQGETQQKLDVIANEVLLDANEWGGHLAAMASEEMESFYEIPNRYPKGEYLLMFDPLDGSSNIDVNVSIGTIFSVLHMPKPGQTVTEADFLQPGTHQVAAGYAVYGPQTTLVLTVGNGVHMFTLDREAGSFVLTQSNVTIPEDTKEFAINMSNMRHWAPPVRKYIDECLAGDEGPRGKNFNMRWVASMVADVHRILTRGGIFMYPWDKREPEKPGKLRLMYEANPMAMLVEQAGGAATNGEQRILDVQPEKLHQRVSVILGSKNEVERVTRYHQEAQAKA</sequence>
<feature type="chain" id="PRO_0000364530" description="Fructose-1,6-bisphosphatase class 1 1">
    <location>
        <begin position="1"/>
        <end position="338"/>
    </location>
</feature>
<feature type="binding site" evidence="1">
    <location>
        <position position="91"/>
    </location>
    <ligand>
        <name>Mg(2+)</name>
        <dbReference type="ChEBI" id="CHEBI:18420"/>
        <label>1</label>
    </ligand>
</feature>
<feature type="binding site" evidence="1">
    <location>
        <position position="113"/>
    </location>
    <ligand>
        <name>Mg(2+)</name>
        <dbReference type="ChEBI" id="CHEBI:18420"/>
        <label>1</label>
    </ligand>
</feature>
<feature type="binding site" evidence="1">
    <location>
        <position position="113"/>
    </location>
    <ligand>
        <name>Mg(2+)</name>
        <dbReference type="ChEBI" id="CHEBI:18420"/>
        <label>2</label>
    </ligand>
</feature>
<feature type="binding site" evidence="1">
    <location>
        <position position="115"/>
    </location>
    <ligand>
        <name>Mg(2+)</name>
        <dbReference type="ChEBI" id="CHEBI:18420"/>
        <label>1</label>
    </ligand>
</feature>
<feature type="binding site" evidence="1">
    <location>
        <begin position="116"/>
        <end position="119"/>
    </location>
    <ligand>
        <name>substrate</name>
    </ligand>
</feature>
<feature type="binding site" evidence="1">
    <location>
        <position position="116"/>
    </location>
    <ligand>
        <name>Mg(2+)</name>
        <dbReference type="ChEBI" id="CHEBI:18420"/>
        <label>2</label>
    </ligand>
</feature>
<feature type="binding site" evidence="1">
    <location>
        <position position="208"/>
    </location>
    <ligand>
        <name>substrate</name>
    </ligand>
</feature>
<feature type="binding site" evidence="1">
    <location>
        <position position="274"/>
    </location>
    <ligand>
        <name>substrate</name>
    </ligand>
</feature>
<feature type="binding site" evidence="1">
    <location>
        <position position="280"/>
    </location>
    <ligand>
        <name>Mg(2+)</name>
        <dbReference type="ChEBI" id="CHEBI:18420"/>
        <label>2</label>
    </ligand>
</feature>
<comment type="catalytic activity">
    <reaction evidence="1">
        <text>beta-D-fructose 1,6-bisphosphate + H2O = beta-D-fructose 6-phosphate + phosphate</text>
        <dbReference type="Rhea" id="RHEA:11064"/>
        <dbReference type="ChEBI" id="CHEBI:15377"/>
        <dbReference type="ChEBI" id="CHEBI:32966"/>
        <dbReference type="ChEBI" id="CHEBI:43474"/>
        <dbReference type="ChEBI" id="CHEBI:57634"/>
        <dbReference type="EC" id="3.1.3.11"/>
    </reaction>
</comment>
<comment type="cofactor">
    <cofactor evidence="1">
        <name>Mg(2+)</name>
        <dbReference type="ChEBI" id="CHEBI:18420"/>
    </cofactor>
    <text evidence="1">Binds 2 magnesium ions per subunit.</text>
</comment>
<comment type="pathway">
    <text evidence="1">Carbohydrate biosynthesis; gluconeogenesis.</text>
</comment>
<comment type="subunit">
    <text evidence="1">Homotetramer.</text>
</comment>
<comment type="subcellular location">
    <subcellularLocation>
        <location evidence="1">Cytoplasm</location>
    </subcellularLocation>
</comment>
<comment type="similarity">
    <text evidence="1">Belongs to the FBPase class 1 family.</text>
</comment>
<dbReference type="EC" id="3.1.3.11" evidence="1"/>
<dbReference type="EMBL" id="CU633749">
    <property type="protein sequence ID" value="CAQ68948.1"/>
    <property type="molecule type" value="Genomic_DNA"/>
</dbReference>
<dbReference type="RefSeq" id="WP_012352281.1">
    <property type="nucleotide sequence ID" value="NC_010528.1"/>
</dbReference>
<dbReference type="SMR" id="B3R3R6"/>
<dbReference type="GeneID" id="29762558"/>
<dbReference type="KEGG" id="cti:RALTA_A0983"/>
<dbReference type="eggNOG" id="COG0158">
    <property type="taxonomic scope" value="Bacteria"/>
</dbReference>
<dbReference type="HOGENOM" id="CLU_039977_0_0_4"/>
<dbReference type="BioCyc" id="CTAI977880:RALTA_RS04660-MONOMER"/>
<dbReference type="UniPathway" id="UPA00138"/>
<dbReference type="Proteomes" id="UP000001692">
    <property type="component" value="Chromosome 1"/>
</dbReference>
<dbReference type="GO" id="GO:0005829">
    <property type="term" value="C:cytosol"/>
    <property type="evidence" value="ECO:0007669"/>
    <property type="project" value="TreeGrafter"/>
</dbReference>
<dbReference type="GO" id="GO:0042132">
    <property type="term" value="F:fructose 1,6-bisphosphate 1-phosphatase activity"/>
    <property type="evidence" value="ECO:0007669"/>
    <property type="project" value="UniProtKB-UniRule"/>
</dbReference>
<dbReference type="GO" id="GO:0000287">
    <property type="term" value="F:magnesium ion binding"/>
    <property type="evidence" value="ECO:0007669"/>
    <property type="project" value="UniProtKB-UniRule"/>
</dbReference>
<dbReference type="GO" id="GO:0030388">
    <property type="term" value="P:fructose 1,6-bisphosphate metabolic process"/>
    <property type="evidence" value="ECO:0007669"/>
    <property type="project" value="TreeGrafter"/>
</dbReference>
<dbReference type="GO" id="GO:0006002">
    <property type="term" value="P:fructose 6-phosphate metabolic process"/>
    <property type="evidence" value="ECO:0007669"/>
    <property type="project" value="TreeGrafter"/>
</dbReference>
<dbReference type="GO" id="GO:0006000">
    <property type="term" value="P:fructose metabolic process"/>
    <property type="evidence" value="ECO:0007669"/>
    <property type="project" value="TreeGrafter"/>
</dbReference>
<dbReference type="GO" id="GO:0006094">
    <property type="term" value="P:gluconeogenesis"/>
    <property type="evidence" value="ECO:0007669"/>
    <property type="project" value="UniProtKB-UniRule"/>
</dbReference>
<dbReference type="GO" id="GO:0005986">
    <property type="term" value="P:sucrose biosynthetic process"/>
    <property type="evidence" value="ECO:0007669"/>
    <property type="project" value="TreeGrafter"/>
</dbReference>
<dbReference type="CDD" id="cd00354">
    <property type="entry name" value="FBPase"/>
    <property type="match status" value="1"/>
</dbReference>
<dbReference type="FunFam" id="3.30.540.10:FF:000006">
    <property type="entry name" value="Fructose-1,6-bisphosphatase class 1"/>
    <property type="match status" value="1"/>
</dbReference>
<dbReference type="FunFam" id="3.40.190.80:FF:000011">
    <property type="entry name" value="Fructose-1,6-bisphosphatase class 1"/>
    <property type="match status" value="1"/>
</dbReference>
<dbReference type="Gene3D" id="3.40.190.80">
    <property type="match status" value="1"/>
</dbReference>
<dbReference type="Gene3D" id="3.30.540.10">
    <property type="entry name" value="Fructose-1,6-Bisphosphatase, subunit A, domain 1"/>
    <property type="match status" value="1"/>
</dbReference>
<dbReference type="HAMAP" id="MF_01855">
    <property type="entry name" value="FBPase_class1"/>
    <property type="match status" value="1"/>
</dbReference>
<dbReference type="InterPro" id="IPR044015">
    <property type="entry name" value="FBPase_C_dom"/>
</dbReference>
<dbReference type="InterPro" id="IPR000146">
    <property type="entry name" value="FBPase_class-1"/>
</dbReference>
<dbReference type="InterPro" id="IPR033391">
    <property type="entry name" value="FBPase_N"/>
</dbReference>
<dbReference type="InterPro" id="IPR028343">
    <property type="entry name" value="FBPtase"/>
</dbReference>
<dbReference type="NCBIfam" id="NF006778">
    <property type="entry name" value="PRK09293.1-1"/>
    <property type="match status" value="1"/>
</dbReference>
<dbReference type="NCBIfam" id="NF006779">
    <property type="entry name" value="PRK09293.1-3"/>
    <property type="match status" value="1"/>
</dbReference>
<dbReference type="NCBIfam" id="NF006780">
    <property type="entry name" value="PRK09293.1-4"/>
    <property type="match status" value="1"/>
</dbReference>
<dbReference type="PANTHER" id="PTHR11556">
    <property type="entry name" value="FRUCTOSE-1,6-BISPHOSPHATASE-RELATED"/>
    <property type="match status" value="1"/>
</dbReference>
<dbReference type="PANTHER" id="PTHR11556:SF35">
    <property type="entry name" value="SEDOHEPTULOSE-1,7-BISPHOSPHATASE, CHLOROPLASTIC"/>
    <property type="match status" value="1"/>
</dbReference>
<dbReference type="Pfam" id="PF00316">
    <property type="entry name" value="FBPase"/>
    <property type="match status" value="1"/>
</dbReference>
<dbReference type="Pfam" id="PF18913">
    <property type="entry name" value="FBPase_C"/>
    <property type="match status" value="1"/>
</dbReference>
<dbReference type="PIRSF" id="PIRSF500210">
    <property type="entry name" value="FBPtase"/>
    <property type="match status" value="1"/>
</dbReference>
<dbReference type="PIRSF" id="PIRSF000904">
    <property type="entry name" value="FBPtase_SBPase"/>
    <property type="match status" value="1"/>
</dbReference>
<dbReference type="PRINTS" id="PR00115">
    <property type="entry name" value="F16BPHPHTASE"/>
</dbReference>
<dbReference type="SUPFAM" id="SSF56655">
    <property type="entry name" value="Carbohydrate phosphatase"/>
    <property type="match status" value="1"/>
</dbReference>